<name>TERM_ADEB2</name>
<sequence length="620" mass="71441">MHLHYKPNGCLFILQNAIDCARLTGQSIYTIEVFRPVRNIWNRAQEWARAAITPAGLGWMSKYIYQYHRLMLMNLSPREPATHNWPLYNYPPPHILVGYQKLLQICNDYIFDVRAYSRLKYSEQINFGSQLMNWSVMANCSYTINTGAYHRFIDMDNFSDTLTSIQQAILAEKIVADLALIRPMRGFGRTNLDADHDVPVEYLLQEQSKDIGACQERAWGLADRIRVQNAGRKDLVILTTIRKLKTAYFNFFLVKHLPLAPEQELSLPCDCFWLDAFIQKFAESDQAAEIDEALRLQQVPTQTLTKCIISALSLPNCAGTALRGGAFTLRPREGNRAVTESMRRARGEMIEQFVDRLPMRRRRRREVPQPQVAAEEYPSEPEELSFESEVRTAVAETIRLLEEELTVSARNQQFFNFAVNFYEVIQRLEALGDINETTLQRWVMYFFVAEHIATTLNYLNHQIRVSSPFGRYVMLNLAQVVMRARNEDGQIVYSRARNENGNTVLVTSCLALALTWLPQLREQGEEIRAGRDEQFMAEIAYHDNSGDVSEILKQVAVNDADIDSMEISFRFRVTGPVVFSGLREIQNINRRVIRAATLFRQERRPLPALNERVQLPPAQE</sequence>
<evidence type="ECO:0000255" key="1">
    <source>
        <dbReference type="HAMAP-Rule" id="MF_04061"/>
    </source>
</evidence>
<gene>
    <name evidence="1" type="primary">PTP</name>
</gene>
<keyword id="KW-0190">Covalent protein-DNA linkage</keyword>
<keyword id="KW-0235">DNA replication</keyword>
<keyword id="KW-0238">DNA-binding</keyword>
<keyword id="KW-1048">Host nucleus</keyword>
<keyword id="KW-0597">Phosphoprotein</keyword>
<keyword id="KW-1185">Reference proteome</keyword>
<keyword id="KW-1194">Viral DNA replication</keyword>
<protein>
    <recommendedName>
        <fullName evidence="1">Preterminal protein</fullName>
        <shortName evidence="1">pTP</shortName>
    </recommendedName>
    <alternativeName>
        <fullName evidence="1">Bellett protein</fullName>
    </alternativeName>
    <alternativeName>
        <fullName evidence="1">Precursor terminal protein</fullName>
    </alternativeName>
    <component>
        <recommendedName>
            <fullName evidence="1">Intermediate terminal protein</fullName>
            <shortName evidence="1">iTP</shortName>
        </recommendedName>
    </component>
    <component>
        <recommendedName>
            <fullName evidence="1">Terminal protein</fullName>
            <shortName evidence="1">TP</shortName>
        </recommendedName>
    </component>
</protein>
<dbReference type="EMBL" id="AF252854">
    <property type="protein sequence ID" value="AAB88488.1"/>
    <property type="molecule type" value="Genomic_DNA"/>
</dbReference>
<dbReference type="RefSeq" id="NP_064287.1">
    <property type="nucleotide sequence ID" value="NC_002513.1"/>
</dbReference>
<dbReference type="KEGG" id="vg:1732717"/>
<dbReference type="OrthoDB" id="4382at10239"/>
<dbReference type="Proteomes" id="UP000154597">
    <property type="component" value="Genome"/>
</dbReference>
<dbReference type="GO" id="GO:0044204">
    <property type="term" value="C:host cell nuclear matrix"/>
    <property type="evidence" value="ECO:0007669"/>
    <property type="project" value="UniProtKB-SubCell"/>
</dbReference>
<dbReference type="GO" id="GO:0003690">
    <property type="term" value="F:double-stranded DNA binding"/>
    <property type="evidence" value="ECO:0007669"/>
    <property type="project" value="UniProtKB-UniRule"/>
</dbReference>
<dbReference type="GO" id="GO:0003697">
    <property type="term" value="F:single-stranded DNA binding"/>
    <property type="evidence" value="ECO:0007669"/>
    <property type="project" value="UniProtKB-UniRule"/>
</dbReference>
<dbReference type="GO" id="GO:0006260">
    <property type="term" value="P:DNA replication"/>
    <property type="evidence" value="ECO:0007669"/>
    <property type="project" value="UniProtKB-KW"/>
</dbReference>
<dbReference type="GO" id="GO:0039687">
    <property type="term" value="P:viral DNA strand displacement replication"/>
    <property type="evidence" value="ECO:0007669"/>
    <property type="project" value="UniProtKB-UniRule"/>
</dbReference>
<dbReference type="HAMAP" id="MF_04061">
    <property type="entry name" value="ADV_TERM"/>
    <property type="match status" value="1"/>
</dbReference>
<dbReference type="InterPro" id="IPR003391">
    <property type="entry name" value="Adeno_preterminal"/>
</dbReference>
<dbReference type="Pfam" id="PF02459">
    <property type="entry name" value="Adeno_terminal"/>
    <property type="match status" value="1"/>
</dbReference>
<comment type="function">
    <text evidence="1">Protein covalently bound to the viral DNA that acts as a primer for viral genomic replication by DNA strand displacement. Assembles on the viral origin of replication in an initiation complex with viral polymerase, DBP, host NFIA and host POU2F1/OCT1. During initiation, the polymerase covalently couples the first dCTP with Ser-580 of pTP. The terminal protein stimulates the template activity over 20 fold compared to protein-free templates. Neo-synthesized viral genomes are linked to two preterminal proteins, one for each 5' end. These new genomes are encapsidated in the nucleus, and during capsid maturation by viral protease, preterminal protein is first cleaved into intermediary (iTP), then into mature TP. May play a role in host nuclear matrix localization of genomic DNA.</text>
</comment>
<comment type="subunit">
    <text evidence="1">Heterodimer with the polymerase; this heterodimer binds to bp 9 to 18 of the genome. Interacts with host POU2F1; POU2F1 binds to the auxiliary sequences in the inverted terminal repeats and tethers the pTP-POL heterodimer to the origin DNA thereby participating in the assembly of the pre-initiation complex (POL-TP-DBP-NFIA-POU2F1).</text>
</comment>
<comment type="subcellular location">
    <subcellularLocation>
        <location evidence="1">Host nucleus matrix</location>
    </subcellularLocation>
</comment>
<comment type="PTM">
    <text evidence="1">Preterminal protein is used to replicate viral genome, upon genomic encapsidation it is processed first into iTP and finally into TP by adenovirus protease.</text>
</comment>
<comment type="similarity">
    <text evidence="1">Belongs to the adenoviridae terminal protein family.</text>
</comment>
<proteinExistence type="inferred from homology"/>
<reference key="1">
    <citation type="journal article" date="1997" name="Intervirology">
        <title>Sequence analysis of the terminal protein precursor coding regions from bovine adenovirus serotypes 2 and 3.</title>
        <authorList>
            <person name="Ojkic D."/>
            <person name="Yagubi A."/>
            <person name="Bautista D."/>
            <person name="Haj-Ahmad Y."/>
        </authorList>
    </citation>
    <scope>NUCLEOTIDE SEQUENCE [GENOMIC DNA]</scope>
    <source>
        <strain>19</strain>
    </source>
</reference>
<feature type="chain" id="PRO_0000221898" description="Preterminal protein" evidence="1">
    <location>
        <begin position="1"/>
        <end position="620"/>
    </location>
</feature>
<feature type="chain" id="PRO_0000433940" description="Intermediate terminal protein" evidence="1">
    <location>
        <begin position="188"/>
        <end position="620"/>
    </location>
</feature>
<feature type="chain" id="PRO_0000433941" description="Terminal protein" evidence="1">
    <location>
        <begin position="326"/>
        <end position="620"/>
    </location>
</feature>
<feature type="short sequence motif" description="Nuclear localization signal" evidence="1">
    <location>
        <begin position="356"/>
        <end position="365"/>
    </location>
</feature>
<feature type="site" description="Cleavage; by adenovirus protease" evidence="1">
    <location>
        <begin position="187"/>
        <end position="188"/>
    </location>
</feature>
<feature type="site" description="Cleavage; by adenovirus protease" evidence="1">
    <location>
        <begin position="325"/>
        <end position="326"/>
    </location>
</feature>
<feature type="site" description="Priming of strand displacement replication by covalently linking the first nucleotide of the new DNA chain" evidence="1">
    <location>
        <position position="545"/>
    </location>
</feature>
<feature type="modified residue" description="O-(5'-phospho-DNA)-serine" evidence="1">
    <location>
        <position position="545"/>
    </location>
</feature>
<accession>O55438</accession>
<organism>
    <name type="scientific">Bovine adenovirus 2</name>
    <name type="common">BAdV-2</name>
    <name type="synonym">Mastadenovirus bos2</name>
    <dbReference type="NCBI Taxonomy" id="114429"/>
    <lineage>
        <taxon>Viruses</taxon>
        <taxon>Varidnaviria</taxon>
        <taxon>Bamfordvirae</taxon>
        <taxon>Preplasmiviricota</taxon>
        <taxon>Tectiliviricetes</taxon>
        <taxon>Rowavirales</taxon>
        <taxon>Adenoviridae</taxon>
        <taxon>Mastadenovirus</taxon>
        <taxon>Ovine mastadenovirus A</taxon>
    </lineage>
</organism>
<organismHost>
    <name type="scientific">Bos taurus</name>
    <name type="common">Bovine</name>
    <dbReference type="NCBI Taxonomy" id="9913"/>
</organismHost>